<organism>
    <name type="scientific">Caulobacter vibrioides (strain NA1000 / CB15N)</name>
    <name type="common">Caulobacter crescentus</name>
    <dbReference type="NCBI Taxonomy" id="565050"/>
    <lineage>
        <taxon>Bacteria</taxon>
        <taxon>Pseudomonadati</taxon>
        <taxon>Pseudomonadota</taxon>
        <taxon>Alphaproteobacteria</taxon>
        <taxon>Caulobacterales</taxon>
        <taxon>Caulobacteraceae</taxon>
        <taxon>Caulobacter</taxon>
    </lineage>
</organism>
<keyword id="KW-1185">Reference proteome</keyword>
<keyword id="KW-0687">Ribonucleoprotein</keyword>
<keyword id="KW-0689">Ribosomal protein</keyword>
<feature type="chain" id="PRO_1000184132" description="Large ribosomal subunit protein uL30">
    <location>
        <begin position="1"/>
        <end position="61"/>
    </location>
</feature>
<comment type="subunit">
    <text evidence="1">Part of the 50S ribosomal subunit.</text>
</comment>
<comment type="similarity">
    <text evidence="1">Belongs to the universal ribosomal protein uL30 family.</text>
</comment>
<dbReference type="EMBL" id="CP001340">
    <property type="protein sequence ID" value="ACL94789.1"/>
    <property type="molecule type" value="Genomic_DNA"/>
</dbReference>
<dbReference type="RefSeq" id="WP_010919145.1">
    <property type="nucleotide sequence ID" value="NC_011916.1"/>
</dbReference>
<dbReference type="RefSeq" id="YP_002516697.1">
    <property type="nucleotide sequence ID" value="NC_011916.1"/>
</dbReference>
<dbReference type="SMR" id="B8H4F2"/>
<dbReference type="GeneID" id="7333056"/>
<dbReference type="KEGG" id="ccs:CCNA_01324"/>
<dbReference type="PATRIC" id="fig|565050.3.peg.1308"/>
<dbReference type="HOGENOM" id="CLU_131047_1_2_5"/>
<dbReference type="OrthoDB" id="9812790at2"/>
<dbReference type="PhylomeDB" id="B8H4F2"/>
<dbReference type="Proteomes" id="UP000001364">
    <property type="component" value="Chromosome"/>
</dbReference>
<dbReference type="GO" id="GO:0015934">
    <property type="term" value="C:large ribosomal subunit"/>
    <property type="evidence" value="ECO:0007669"/>
    <property type="project" value="InterPro"/>
</dbReference>
<dbReference type="GO" id="GO:0003735">
    <property type="term" value="F:structural constituent of ribosome"/>
    <property type="evidence" value="ECO:0007669"/>
    <property type="project" value="InterPro"/>
</dbReference>
<dbReference type="GO" id="GO:0006412">
    <property type="term" value="P:translation"/>
    <property type="evidence" value="ECO:0007669"/>
    <property type="project" value="UniProtKB-UniRule"/>
</dbReference>
<dbReference type="CDD" id="cd01658">
    <property type="entry name" value="Ribosomal_L30"/>
    <property type="match status" value="1"/>
</dbReference>
<dbReference type="Gene3D" id="3.30.1390.20">
    <property type="entry name" value="Ribosomal protein L30, ferredoxin-like fold domain"/>
    <property type="match status" value="1"/>
</dbReference>
<dbReference type="HAMAP" id="MF_01371_B">
    <property type="entry name" value="Ribosomal_uL30_B"/>
    <property type="match status" value="1"/>
</dbReference>
<dbReference type="InterPro" id="IPR036919">
    <property type="entry name" value="Ribo_uL30_ferredoxin-like_sf"/>
</dbReference>
<dbReference type="InterPro" id="IPR005996">
    <property type="entry name" value="Ribosomal_uL30_bac-type"/>
</dbReference>
<dbReference type="InterPro" id="IPR016082">
    <property type="entry name" value="Ribosomal_uL30_ferredoxin-like"/>
</dbReference>
<dbReference type="NCBIfam" id="TIGR01308">
    <property type="entry name" value="rpmD_bact"/>
    <property type="match status" value="1"/>
</dbReference>
<dbReference type="Pfam" id="PF00327">
    <property type="entry name" value="Ribosomal_L30"/>
    <property type="match status" value="1"/>
</dbReference>
<dbReference type="PIRSF" id="PIRSF002211">
    <property type="entry name" value="Ribosomal_L30_bac-type"/>
    <property type="match status" value="1"/>
</dbReference>
<dbReference type="SUPFAM" id="SSF55129">
    <property type="entry name" value="Ribosomal protein L30p/L7e"/>
    <property type="match status" value="1"/>
</dbReference>
<accession>B8H4F2</accession>
<proteinExistence type="inferred from homology"/>
<sequence length="61" mass="6812">MAEAKTVTVRQTGSPIRREKDQRATLVGLGLNRVGRVSTLQDNPSTRGMIRKVQHLLEIVE</sequence>
<gene>
    <name evidence="1" type="primary">rpmD</name>
    <name type="ordered locus">CCNA_01324</name>
</gene>
<evidence type="ECO:0000255" key="1">
    <source>
        <dbReference type="HAMAP-Rule" id="MF_01371"/>
    </source>
</evidence>
<evidence type="ECO:0000305" key="2"/>
<name>RL30_CAUVN</name>
<protein>
    <recommendedName>
        <fullName evidence="1">Large ribosomal subunit protein uL30</fullName>
    </recommendedName>
    <alternativeName>
        <fullName evidence="2">50S ribosomal protein L30</fullName>
    </alternativeName>
</protein>
<reference key="1">
    <citation type="journal article" date="2010" name="J. Bacteriol.">
        <title>The genetic basis of laboratory adaptation in Caulobacter crescentus.</title>
        <authorList>
            <person name="Marks M.E."/>
            <person name="Castro-Rojas C.M."/>
            <person name="Teiling C."/>
            <person name="Du L."/>
            <person name="Kapatral V."/>
            <person name="Walunas T.L."/>
            <person name="Crosson S."/>
        </authorList>
    </citation>
    <scope>NUCLEOTIDE SEQUENCE [LARGE SCALE GENOMIC DNA]</scope>
    <source>
        <strain>NA1000 / CB15N</strain>
    </source>
</reference>